<feature type="chain" id="PRO_1000127576" description="D-aminoacyl-tRNA deacylase">
    <location>
        <begin position="1"/>
        <end position="147"/>
    </location>
</feature>
<feature type="short sequence motif" description="Gly-cisPro motif, important for rejection of L-amino acids" evidence="1">
    <location>
        <begin position="136"/>
        <end position="137"/>
    </location>
</feature>
<organism>
    <name type="scientific">Streptococcus equi subsp. zooepidemicus (strain MGCS10565)</name>
    <dbReference type="NCBI Taxonomy" id="552526"/>
    <lineage>
        <taxon>Bacteria</taxon>
        <taxon>Bacillati</taxon>
        <taxon>Bacillota</taxon>
        <taxon>Bacilli</taxon>
        <taxon>Lactobacillales</taxon>
        <taxon>Streptococcaceae</taxon>
        <taxon>Streptococcus</taxon>
    </lineage>
</organism>
<keyword id="KW-0963">Cytoplasm</keyword>
<keyword id="KW-0378">Hydrolase</keyword>
<keyword id="KW-0694">RNA-binding</keyword>
<keyword id="KW-0820">tRNA-binding</keyword>
<reference key="1">
    <citation type="journal article" date="2008" name="PLoS ONE">
        <title>Genome sequence of a lancefield group C Streptococcus zooepidemicus strain causing epidemic nephritis: new information about an old disease.</title>
        <authorList>
            <person name="Beres S.B."/>
            <person name="Sesso R."/>
            <person name="Pinto S.W.L."/>
            <person name="Hoe N.P."/>
            <person name="Porcella S.F."/>
            <person name="Deleo F.R."/>
            <person name="Musser J.M."/>
        </authorList>
    </citation>
    <scope>NUCLEOTIDE SEQUENCE [LARGE SCALE GENOMIC DNA]</scope>
    <source>
        <strain>MGCS10565</strain>
    </source>
</reference>
<dbReference type="EC" id="3.1.1.96" evidence="1"/>
<dbReference type="EMBL" id="CP001129">
    <property type="protein sequence ID" value="ACG63103.1"/>
    <property type="molecule type" value="Genomic_DNA"/>
</dbReference>
<dbReference type="RefSeq" id="WP_012516353.1">
    <property type="nucleotide sequence ID" value="NC_011134.1"/>
</dbReference>
<dbReference type="SMR" id="B4U592"/>
<dbReference type="KEGG" id="sez:Sez_1776"/>
<dbReference type="HOGENOM" id="CLU_076901_1_0_9"/>
<dbReference type="Proteomes" id="UP000001873">
    <property type="component" value="Chromosome"/>
</dbReference>
<dbReference type="GO" id="GO:0005737">
    <property type="term" value="C:cytoplasm"/>
    <property type="evidence" value="ECO:0007669"/>
    <property type="project" value="UniProtKB-SubCell"/>
</dbReference>
<dbReference type="GO" id="GO:0051500">
    <property type="term" value="F:D-tyrosyl-tRNA(Tyr) deacylase activity"/>
    <property type="evidence" value="ECO:0007669"/>
    <property type="project" value="TreeGrafter"/>
</dbReference>
<dbReference type="GO" id="GO:0106026">
    <property type="term" value="F:Gly-tRNA(Ala) deacylase activity"/>
    <property type="evidence" value="ECO:0007669"/>
    <property type="project" value="UniProtKB-UniRule"/>
</dbReference>
<dbReference type="GO" id="GO:0043908">
    <property type="term" value="F:Ser(Gly)-tRNA(Ala) hydrolase activity"/>
    <property type="evidence" value="ECO:0007669"/>
    <property type="project" value="UniProtKB-UniRule"/>
</dbReference>
<dbReference type="GO" id="GO:0000049">
    <property type="term" value="F:tRNA binding"/>
    <property type="evidence" value="ECO:0007669"/>
    <property type="project" value="UniProtKB-UniRule"/>
</dbReference>
<dbReference type="GO" id="GO:0019478">
    <property type="term" value="P:D-amino acid catabolic process"/>
    <property type="evidence" value="ECO:0007669"/>
    <property type="project" value="UniProtKB-UniRule"/>
</dbReference>
<dbReference type="CDD" id="cd00563">
    <property type="entry name" value="Dtyr_deacylase"/>
    <property type="match status" value="1"/>
</dbReference>
<dbReference type="FunFam" id="3.50.80.10:FF:000001">
    <property type="entry name" value="D-aminoacyl-tRNA deacylase"/>
    <property type="match status" value="1"/>
</dbReference>
<dbReference type="Gene3D" id="3.50.80.10">
    <property type="entry name" value="D-tyrosyl-tRNA(Tyr) deacylase"/>
    <property type="match status" value="1"/>
</dbReference>
<dbReference type="HAMAP" id="MF_00518">
    <property type="entry name" value="Deacylase_Dtd"/>
    <property type="match status" value="1"/>
</dbReference>
<dbReference type="InterPro" id="IPR003732">
    <property type="entry name" value="Daa-tRNA_deacyls_DTD"/>
</dbReference>
<dbReference type="InterPro" id="IPR023509">
    <property type="entry name" value="DTD-like_sf"/>
</dbReference>
<dbReference type="NCBIfam" id="TIGR00256">
    <property type="entry name" value="D-aminoacyl-tRNA deacylase"/>
    <property type="match status" value="1"/>
</dbReference>
<dbReference type="PANTHER" id="PTHR10472:SF5">
    <property type="entry name" value="D-AMINOACYL-TRNA DEACYLASE 1"/>
    <property type="match status" value="1"/>
</dbReference>
<dbReference type="PANTHER" id="PTHR10472">
    <property type="entry name" value="D-TYROSYL-TRNA TYR DEACYLASE"/>
    <property type="match status" value="1"/>
</dbReference>
<dbReference type="Pfam" id="PF02580">
    <property type="entry name" value="Tyr_Deacylase"/>
    <property type="match status" value="1"/>
</dbReference>
<dbReference type="SUPFAM" id="SSF69500">
    <property type="entry name" value="DTD-like"/>
    <property type="match status" value="1"/>
</dbReference>
<name>DTD_STREM</name>
<protein>
    <recommendedName>
        <fullName evidence="1">D-aminoacyl-tRNA deacylase</fullName>
        <shortName evidence="1">DTD</shortName>
        <ecNumber evidence="1">3.1.1.96</ecNumber>
    </recommendedName>
    <alternativeName>
        <fullName evidence="1">Gly-tRNA(Ala) deacylase</fullName>
    </alternativeName>
</protein>
<evidence type="ECO:0000255" key="1">
    <source>
        <dbReference type="HAMAP-Rule" id="MF_00518"/>
    </source>
</evidence>
<comment type="function">
    <text evidence="1">An aminoacyl-tRNA editing enzyme that deacylates mischarged D-aminoacyl-tRNAs. Also deacylates mischarged glycyl-tRNA(Ala), protecting cells against glycine mischarging by AlaRS. Acts via tRNA-based rather than protein-based catalysis; rejects L-amino acids rather than detecting D-amino acids in the active site. By recycling D-aminoacyl-tRNA to D-amino acids and free tRNA molecules, this enzyme counteracts the toxicity associated with the formation of D-aminoacyl-tRNA entities in vivo and helps enforce protein L-homochirality.</text>
</comment>
<comment type="catalytic activity">
    <reaction evidence="1">
        <text>glycyl-tRNA(Ala) + H2O = tRNA(Ala) + glycine + H(+)</text>
        <dbReference type="Rhea" id="RHEA:53744"/>
        <dbReference type="Rhea" id="RHEA-COMP:9657"/>
        <dbReference type="Rhea" id="RHEA-COMP:13640"/>
        <dbReference type="ChEBI" id="CHEBI:15377"/>
        <dbReference type="ChEBI" id="CHEBI:15378"/>
        <dbReference type="ChEBI" id="CHEBI:57305"/>
        <dbReference type="ChEBI" id="CHEBI:78442"/>
        <dbReference type="ChEBI" id="CHEBI:78522"/>
        <dbReference type="EC" id="3.1.1.96"/>
    </reaction>
</comment>
<comment type="catalytic activity">
    <reaction evidence="1">
        <text>a D-aminoacyl-tRNA + H2O = a tRNA + a D-alpha-amino acid + H(+)</text>
        <dbReference type="Rhea" id="RHEA:13953"/>
        <dbReference type="Rhea" id="RHEA-COMP:10123"/>
        <dbReference type="Rhea" id="RHEA-COMP:10124"/>
        <dbReference type="ChEBI" id="CHEBI:15377"/>
        <dbReference type="ChEBI" id="CHEBI:15378"/>
        <dbReference type="ChEBI" id="CHEBI:59871"/>
        <dbReference type="ChEBI" id="CHEBI:78442"/>
        <dbReference type="ChEBI" id="CHEBI:79333"/>
        <dbReference type="EC" id="3.1.1.96"/>
    </reaction>
</comment>
<comment type="subunit">
    <text evidence="1">Homodimer.</text>
</comment>
<comment type="subcellular location">
    <subcellularLocation>
        <location evidence="1">Cytoplasm</location>
    </subcellularLocation>
</comment>
<comment type="domain">
    <text evidence="1">A Gly-cisPro motif from one monomer fits into the active site of the other monomer to allow specific chiral rejection of L-amino acids.</text>
</comment>
<comment type="similarity">
    <text evidence="1">Belongs to the DTD family.</text>
</comment>
<sequence length="147" mass="16048">MKIVIQRVKEASVSIDGKIAGAIDQGLLLLVGIGPDDQAEDIDYAVRKISHMRIFSDSEGKMNRSIQDIEGSVLSISQFTLYADTKKGNRPAFTGAAKPDKASQLYNSFNDHLEELVPVKRGVFGADMQVSLINDGPVTIILDTKNR</sequence>
<proteinExistence type="inferred from homology"/>
<accession>B4U592</accession>
<gene>
    <name evidence="1" type="primary">dtd</name>
    <name type="ordered locus">Sez_1776</name>
</gene>